<keyword id="KW-0963">Cytoplasm</keyword>
<keyword id="KW-0369">Histidine metabolism</keyword>
<keyword id="KW-0378">Hydrolase</keyword>
<keyword id="KW-0408">Iron</keyword>
<keyword id="KW-0479">Metal-binding</keyword>
<keyword id="KW-0862">Zinc</keyword>
<sequence length="408" mass="44206">MSWDQVWIDINIATMSPKISEPYGAITDAALAVQDGKIAWVGKRSDLPEFDVFGTPIYKGKGGWITPGLIDAHTHLIFAGNRANEFELRLKGASYEEIARSGGGIISTVNACREADEAELFELGRQRLNALAKEGVTTVEIKSGYGLDIETELKILRVARELGKHHHVDVKTTFLGAHAIPPEYKNDSDAYVDLVINEMLPKVMAENLADAVDVFCENIAFNLEQTERVLTAAIDAGLDIKLHAEQLSNMGGSAMAARLGAKSVDHIEYLDEAGVKALSESGTCATLLPGAFYFLRETQHPPIDLLRKYQVPMVVASDYNPGSSPLCSSLLMLNMACTLLRLTPEEALAGMTRNAAKALGIDDHVGVIEVGMTADFCIWNISTPAELAYTYGVASCVDVVKNGNLVHQ</sequence>
<accession>B0TM54</accession>
<evidence type="ECO:0000255" key="1">
    <source>
        <dbReference type="HAMAP-Rule" id="MF_00372"/>
    </source>
</evidence>
<name>HUTI_SHEHH</name>
<organism>
    <name type="scientific">Shewanella halifaxensis (strain HAW-EB4)</name>
    <dbReference type="NCBI Taxonomy" id="458817"/>
    <lineage>
        <taxon>Bacteria</taxon>
        <taxon>Pseudomonadati</taxon>
        <taxon>Pseudomonadota</taxon>
        <taxon>Gammaproteobacteria</taxon>
        <taxon>Alteromonadales</taxon>
        <taxon>Shewanellaceae</taxon>
        <taxon>Shewanella</taxon>
    </lineage>
</organism>
<proteinExistence type="inferred from homology"/>
<reference key="1">
    <citation type="submission" date="2008-01" db="EMBL/GenBank/DDBJ databases">
        <title>Complete sequence of Shewanella halifaxensis HAW-EB4.</title>
        <authorList>
            <consortium name="US DOE Joint Genome Institute"/>
            <person name="Copeland A."/>
            <person name="Lucas S."/>
            <person name="Lapidus A."/>
            <person name="Glavina del Rio T."/>
            <person name="Dalin E."/>
            <person name="Tice H."/>
            <person name="Bruce D."/>
            <person name="Goodwin L."/>
            <person name="Pitluck S."/>
            <person name="Sims D."/>
            <person name="Brettin T."/>
            <person name="Detter J.C."/>
            <person name="Han C."/>
            <person name="Kuske C.R."/>
            <person name="Schmutz J."/>
            <person name="Larimer F."/>
            <person name="Land M."/>
            <person name="Hauser L."/>
            <person name="Kyrpides N."/>
            <person name="Kim E."/>
            <person name="Zhao J.-S."/>
            <person name="Richardson P."/>
        </authorList>
    </citation>
    <scope>NUCLEOTIDE SEQUENCE [LARGE SCALE GENOMIC DNA]</scope>
    <source>
        <strain>HAW-EB4</strain>
    </source>
</reference>
<gene>
    <name evidence="1" type="primary">hutI</name>
    <name type="ordered locus">Shal_0071</name>
</gene>
<dbReference type="EC" id="3.5.2.7" evidence="1"/>
<dbReference type="EMBL" id="CP000931">
    <property type="protein sequence ID" value="ABZ74647.1"/>
    <property type="molecule type" value="Genomic_DNA"/>
</dbReference>
<dbReference type="RefSeq" id="WP_012275204.1">
    <property type="nucleotide sequence ID" value="NC_010334.1"/>
</dbReference>
<dbReference type="SMR" id="B0TM54"/>
<dbReference type="STRING" id="458817.Shal_0071"/>
<dbReference type="KEGG" id="shl:Shal_0071"/>
<dbReference type="eggNOG" id="COG1228">
    <property type="taxonomic scope" value="Bacteria"/>
</dbReference>
<dbReference type="HOGENOM" id="CLU_041647_0_0_6"/>
<dbReference type="OrthoDB" id="9776455at2"/>
<dbReference type="UniPathway" id="UPA00379">
    <property type="reaction ID" value="UER00551"/>
</dbReference>
<dbReference type="Proteomes" id="UP000001317">
    <property type="component" value="Chromosome"/>
</dbReference>
<dbReference type="GO" id="GO:0005737">
    <property type="term" value="C:cytoplasm"/>
    <property type="evidence" value="ECO:0007669"/>
    <property type="project" value="UniProtKB-SubCell"/>
</dbReference>
<dbReference type="GO" id="GO:0050480">
    <property type="term" value="F:imidazolonepropionase activity"/>
    <property type="evidence" value="ECO:0007669"/>
    <property type="project" value="UniProtKB-UniRule"/>
</dbReference>
<dbReference type="GO" id="GO:0005506">
    <property type="term" value="F:iron ion binding"/>
    <property type="evidence" value="ECO:0007669"/>
    <property type="project" value="UniProtKB-UniRule"/>
</dbReference>
<dbReference type="GO" id="GO:0008270">
    <property type="term" value="F:zinc ion binding"/>
    <property type="evidence" value="ECO:0007669"/>
    <property type="project" value="UniProtKB-UniRule"/>
</dbReference>
<dbReference type="GO" id="GO:0019556">
    <property type="term" value="P:L-histidine catabolic process to glutamate and formamide"/>
    <property type="evidence" value="ECO:0007669"/>
    <property type="project" value="UniProtKB-UniPathway"/>
</dbReference>
<dbReference type="GO" id="GO:0019557">
    <property type="term" value="P:L-histidine catabolic process to glutamate and formate"/>
    <property type="evidence" value="ECO:0007669"/>
    <property type="project" value="UniProtKB-UniPathway"/>
</dbReference>
<dbReference type="CDD" id="cd01296">
    <property type="entry name" value="Imidazolone-5PH"/>
    <property type="match status" value="1"/>
</dbReference>
<dbReference type="FunFam" id="3.20.20.140:FF:000007">
    <property type="entry name" value="Imidazolonepropionase"/>
    <property type="match status" value="1"/>
</dbReference>
<dbReference type="Gene3D" id="3.20.20.140">
    <property type="entry name" value="Metal-dependent hydrolases"/>
    <property type="match status" value="1"/>
</dbReference>
<dbReference type="Gene3D" id="2.30.40.10">
    <property type="entry name" value="Urease, subunit C, domain 1"/>
    <property type="match status" value="1"/>
</dbReference>
<dbReference type="HAMAP" id="MF_00372">
    <property type="entry name" value="HutI"/>
    <property type="match status" value="1"/>
</dbReference>
<dbReference type="InterPro" id="IPR006680">
    <property type="entry name" value="Amidohydro-rel"/>
</dbReference>
<dbReference type="InterPro" id="IPR005920">
    <property type="entry name" value="HutI"/>
</dbReference>
<dbReference type="InterPro" id="IPR011059">
    <property type="entry name" value="Metal-dep_hydrolase_composite"/>
</dbReference>
<dbReference type="InterPro" id="IPR032466">
    <property type="entry name" value="Metal_Hydrolase"/>
</dbReference>
<dbReference type="NCBIfam" id="TIGR01224">
    <property type="entry name" value="hutI"/>
    <property type="match status" value="1"/>
</dbReference>
<dbReference type="PANTHER" id="PTHR42752">
    <property type="entry name" value="IMIDAZOLONEPROPIONASE"/>
    <property type="match status" value="1"/>
</dbReference>
<dbReference type="PANTHER" id="PTHR42752:SF1">
    <property type="entry name" value="IMIDAZOLONEPROPIONASE-RELATED"/>
    <property type="match status" value="1"/>
</dbReference>
<dbReference type="Pfam" id="PF01979">
    <property type="entry name" value="Amidohydro_1"/>
    <property type="match status" value="1"/>
</dbReference>
<dbReference type="SUPFAM" id="SSF51338">
    <property type="entry name" value="Composite domain of metallo-dependent hydrolases"/>
    <property type="match status" value="1"/>
</dbReference>
<dbReference type="SUPFAM" id="SSF51556">
    <property type="entry name" value="Metallo-dependent hydrolases"/>
    <property type="match status" value="1"/>
</dbReference>
<comment type="function">
    <text evidence="1">Catalyzes the hydrolytic cleavage of the carbon-nitrogen bond in imidazolone-5-propanoate to yield N-formimidoyl-L-glutamate. It is the third step in the universal histidine degradation pathway.</text>
</comment>
<comment type="catalytic activity">
    <reaction evidence="1">
        <text>4-imidazolone-5-propanoate + H2O = N-formimidoyl-L-glutamate</text>
        <dbReference type="Rhea" id="RHEA:23660"/>
        <dbReference type="ChEBI" id="CHEBI:15377"/>
        <dbReference type="ChEBI" id="CHEBI:58928"/>
        <dbReference type="ChEBI" id="CHEBI:77893"/>
        <dbReference type="EC" id="3.5.2.7"/>
    </reaction>
</comment>
<comment type="cofactor">
    <cofactor evidence="1">
        <name>Zn(2+)</name>
        <dbReference type="ChEBI" id="CHEBI:29105"/>
    </cofactor>
    <cofactor evidence="1">
        <name>Fe(3+)</name>
        <dbReference type="ChEBI" id="CHEBI:29034"/>
    </cofactor>
    <text evidence="1">Binds 1 zinc or iron ion per subunit.</text>
</comment>
<comment type="pathway">
    <text evidence="1">Amino-acid degradation; L-histidine degradation into L-glutamate; N-formimidoyl-L-glutamate from L-histidine: step 3/3.</text>
</comment>
<comment type="subcellular location">
    <subcellularLocation>
        <location evidence="1">Cytoplasm</location>
    </subcellularLocation>
</comment>
<comment type="similarity">
    <text evidence="1">Belongs to the metallo-dependent hydrolases superfamily. HutI family.</text>
</comment>
<feature type="chain" id="PRO_1000079829" description="Imidazolonepropionase">
    <location>
        <begin position="1"/>
        <end position="408"/>
    </location>
</feature>
<feature type="binding site" evidence="1">
    <location>
        <position position="73"/>
    </location>
    <ligand>
        <name>Fe(3+)</name>
        <dbReference type="ChEBI" id="CHEBI:29034"/>
    </ligand>
</feature>
<feature type="binding site" evidence="1">
    <location>
        <position position="73"/>
    </location>
    <ligand>
        <name>Zn(2+)</name>
        <dbReference type="ChEBI" id="CHEBI:29105"/>
    </ligand>
</feature>
<feature type="binding site" evidence="1">
    <location>
        <position position="75"/>
    </location>
    <ligand>
        <name>Fe(3+)</name>
        <dbReference type="ChEBI" id="CHEBI:29034"/>
    </ligand>
</feature>
<feature type="binding site" evidence="1">
    <location>
        <position position="75"/>
    </location>
    <ligand>
        <name>Zn(2+)</name>
        <dbReference type="ChEBI" id="CHEBI:29105"/>
    </ligand>
</feature>
<feature type="binding site" evidence="1">
    <location>
        <position position="82"/>
    </location>
    <ligand>
        <name>4-imidazolone-5-propanoate</name>
        <dbReference type="ChEBI" id="CHEBI:77893"/>
    </ligand>
</feature>
<feature type="binding site" evidence="1">
    <location>
        <position position="145"/>
    </location>
    <ligand>
        <name>4-imidazolone-5-propanoate</name>
        <dbReference type="ChEBI" id="CHEBI:77893"/>
    </ligand>
</feature>
<feature type="binding site" evidence="1">
    <location>
        <position position="145"/>
    </location>
    <ligand>
        <name>N-formimidoyl-L-glutamate</name>
        <dbReference type="ChEBI" id="CHEBI:58928"/>
    </ligand>
</feature>
<feature type="binding site" evidence="1">
    <location>
        <position position="178"/>
    </location>
    <ligand>
        <name>4-imidazolone-5-propanoate</name>
        <dbReference type="ChEBI" id="CHEBI:77893"/>
    </ligand>
</feature>
<feature type="binding site" evidence="1">
    <location>
        <position position="243"/>
    </location>
    <ligand>
        <name>Fe(3+)</name>
        <dbReference type="ChEBI" id="CHEBI:29034"/>
    </ligand>
</feature>
<feature type="binding site" evidence="1">
    <location>
        <position position="243"/>
    </location>
    <ligand>
        <name>Zn(2+)</name>
        <dbReference type="ChEBI" id="CHEBI:29105"/>
    </ligand>
</feature>
<feature type="binding site" evidence="1">
    <location>
        <position position="246"/>
    </location>
    <ligand>
        <name>4-imidazolone-5-propanoate</name>
        <dbReference type="ChEBI" id="CHEBI:77893"/>
    </ligand>
</feature>
<feature type="binding site" evidence="1">
    <location>
        <position position="318"/>
    </location>
    <ligand>
        <name>Fe(3+)</name>
        <dbReference type="ChEBI" id="CHEBI:29034"/>
    </ligand>
</feature>
<feature type="binding site" evidence="1">
    <location>
        <position position="318"/>
    </location>
    <ligand>
        <name>Zn(2+)</name>
        <dbReference type="ChEBI" id="CHEBI:29105"/>
    </ligand>
</feature>
<feature type="binding site" evidence="1">
    <location>
        <position position="320"/>
    </location>
    <ligand>
        <name>N-formimidoyl-L-glutamate</name>
        <dbReference type="ChEBI" id="CHEBI:58928"/>
    </ligand>
</feature>
<feature type="binding site" evidence="1">
    <location>
        <position position="322"/>
    </location>
    <ligand>
        <name>N-formimidoyl-L-glutamate</name>
        <dbReference type="ChEBI" id="CHEBI:58928"/>
    </ligand>
</feature>
<feature type="binding site" evidence="1">
    <location>
        <position position="323"/>
    </location>
    <ligand>
        <name>4-imidazolone-5-propanoate</name>
        <dbReference type="ChEBI" id="CHEBI:77893"/>
    </ligand>
</feature>
<protein>
    <recommendedName>
        <fullName evidence="1">Imidazolonepropionase</fullName>
        <ecNumber evidence="1">3.5.2.7</ecNumber>
    </recommendedName>
    <alternativeName>
        <fullName evidence="1">Imidazolone-5-propionate hydrolase</fullName>
    </alternativeName>
</protein>